<feature type="chain" id="PRO_0000101951" description="UDP-N-acetylmuramoyl-L-alanyl-D-glutamate--2,6-diaminopimelate ligase">
    <location>
        <begin position="1"/>
        <end position="506"/>
    </location>
</feature>
<feature type="short sequence motif" description="Meso-diaminopimelate recognition motif">
    <location>
        <begin position="419"/>
        <end position="422"/>
    </location>
</feature>
<feature type="binding site" evidence="1">
    <location>
        <position position="42"/>
    </location>
    <ligand>
        <name>UDP-N-acetyl-alpha-D-muramoyl-L-alanyl-D-glutamate</name>
        <dbReference type="ChEBI" id="CHEBI:83900"/>
    </ligand>
</feature>
<feature type="binding site" evidence="1">
    <location>
        <begin position="125"/>
        <end position="131"/>
    </location>
    <ligand>
        <name>ATP</name>
        <dbReference type="ChEBI" id="CHEBI:30616"/>
    </ligand>
</feature>
<feature type="binding site" evidence="1">
    <location>
        <begin position="166"/>
        <end position="167"/>
    </location>
    <ligand>
        <name>UDP-N-acetyl-alpha-D-muramoyl-L-alanyl-D-glutamate</name>
        <dbReference type="ChEBI" id="CHEBI:83900"/>
    </ligand>
</feature>
<feature type="binding site" evidence="1">
    <location>
        <position position="193"/>
    </location>
    <ligand>
        <name>UDP-N-acetyl-alpha-D-muramoyl-L-alanyl-D-glutamate</name>
        <dbReference type="ChEBI" id="CHEBI:83900"/>
    </ligand>
</feature>
<feature type="binding site" evidence="1">
    <location>
        <position position="201"/>
    </location>
    <ligand>
        <name>UDP-N-acetyl-alpha-D-muramoyl-L-alanyl-D-glutamate</name>
        <dbReference type="ChEBI" id="CHEBI:83900"/>
    </ligand>
</feature>
<feature type="binding site" evidence="1">
    <location>
        <position position="395"/>
    </location>
    <ligand>
        <name>meso-2,6-diaminopimelate</name>
        <dbReference type="ChEBI" id="CHEBI:57791"/>
    </ligand>
</feature>
<feature type="binding site" evidence="1">
    <location>
        <begin position="419"/>
        <end position="422"/>
    </location>
    <ligand>
        <name>meso-2,6-diaminopimelate</name>
        <dbReference type="ChEBI" id="CHEBI:57791"/>
    </ligand>
</feature>
<feature type="binding site" evidence="1">
    <location>
        <position position="475"/>
    </location>
    <ligand>
        <name>meso-2,6-diaminopimelate</name>
        <dbReference type="ChEBI" id="CHEBI:57791"/>
    </ligand>
</feature>
<feature type="binding site" evidence="1">
    <location>
        <position position="479"/>
    </location>
    <ligand>
        <name>meso-2,6-diaminopimelate</name>
        <dbReference type="ChEBI" id="CHEBI:57791"/>
    </ligand>
</feature>
<feature type="modified residue" description="N6-carboxylysine" evidence="1">
    <location>
        <position position="233"/>
    </location>
</feature>
<organism>
    <name type="scientific">Streptomyces coelicolor (strain ATCC BAA-471 / A3(2) / M145)</name>
    <dbReference type="NCBI Taxonomy" id="100226"/>
    <lineage>
        <taxon>Bacteria</taxon>
        <taxon>Bacillati</taxon>
        <taxon>Actinomycetota</taxon>
        <taxon>Actinomycetes</taxon>
        <taxon>Kitasatosporales</taxon>
        <taxon>Streptomycetaceae</taxon>
        <taxon>Streptomyces</taxon>
        <taxon>Streptomyces albidoflavus group</taxon>
    </lineage>
</organism>
<keyword id="KW-0067">ATP-binding</keyword>
<keyword id="KW-0131">Cell cycle</keyword>
<keyword id="KW-0132">Cell division</keyword>
<keyword id="KW-0133">Cell shape</keyword>
<keyword id="KW-0961">Cell wall biogenesis/degradation</keyword>
<keyword id="KW-0963">Cytoplasm</keyword>
<keyword id="KW-0436">Ligase</keyword>
<keyword id="KW-0460">Magnesium</keyword>
<keyword id="KW-0547">Nucleotide-binding</keyword>
<keyword id="KW-0573">Peptidoglycan synthesis</keyword>
<keyword id="KW-1185">Reference proteome</keyword>
<evidence type="ECO:0000255" key="1">
    <source>
        <dbReference type="HAMAP-Rule" id="MF_00208"/>
    </source>
</evidence>
<gene>
    <name evidence="1" type="primary">murE</name>
    <name type="ordered locus">SCO2089</name>
    <name type="ORF">SC4A10.22c</name>
</gene>
<accession>Q9S2W7</accession>
<name>MURE_STRCO</name>
<sequence length="506" mass="52829">MTYPGPPRPVRISATPLAELADQLGVAAPDGSAEITGITHDSRAVRPGDLYAALPGARLHGADFVTQAAGLGAAAVLTDPAGAERAAAAGLPALVVDDPRARMGELAATIYGHPGRDLLQIGITGTSGKTTTAYLVEGGLRTAKSTGLIGTVEMRIGDERIKSERTTPEATDLQALFAVMRERGTEAVAMEVSSHALVLGRVDACVFDIAVFTNLSPEHMEFHSGMEDYFQAKAQLFTPKRSRLGVVNVDDEYGRRLAKEATVPVVTYSAEGHPDADWRADEVEVGPLDSTFTVLGPKGERIAAKSPLAGPFNVANTLAAIVALAAAGLDPQSAADGVAAVPGVPGRLERVDEGQPFFAVVDYAHKTDAVESVLRALRKVTEGKLHAVLGCGGDRDTTKREPMGAAVARFADTAVLTSDNPRSEDPLAILATMLQGAASVPAHERGEVQVFEDRAAAIAAAVARAEPGDTVLVAGKGHEQGQDIAGVVRPFDDRQVLREAIKKTQG</sequence>
<protein>
    <recommendedName>
        <fullName evidence="1">UDP-N-acetylmuramoyl-L-alanyl-D-glutamate--2,6-diaminopimelate ligase</fullName>
        <ecNumber evidence="1">6.3.2.13</ecNumber>
    </recommendedName>
    <alternativeName>
        <fullName evidence="1">Meso-A2pm-adding enzyme</fullName>
    </alternativeName>
    <alternativeName>
        <fullName evidence="1">Meso-diaminopimelate-adding enzyme</fullName>
    </alternativeName>
    <alternativeName>
        <fullName evidence="1">UDP-MurNAc-L-Ala-D-Glu:meso-diaminopimelate ligase</fullName>
    </alternativeName>
    <alternativeName>
        <fullName evidence="1">UDP-MurNAc-tripeptide synthetase</fullName>
    </alternativeName>
    <alternativeName>
        <fullName evidence="1">UDP-N-acetylmuramyl-tripeptide synthetase</fullName>
    </alternativeName>
</protein>
<comment type="function">
    <text evidence="1">Catalyzes the addition of meso-diaminopimelic acid to the nucleotide precursor UDP-N-acetylmuramoyl-L-alanyl-D-glutamate (UMAG) in the biosynthesis of bacterial cell-wall peptidoglycan.</text>
</comment>
<comment type="catalytic activity">
    <reaction evidence="1">
        <text>UDP-N-acetyl-alpha-D-muramoyl-L-alanyl-D-glutamate + meso-2,6-diaminopimelate + ATP = UDP-N-acetyl-alpha-D-muramoyl-L-alanyl-gamma-D-glutamyl-meso-2,6-diaminopimelate + ADP + phosphate + H(+)</text>
        <dbReference type="Rhea" id="RHEA:23676"/>
        <dbReference type="ChEBI" id="CHEBI:15378"/>
        <dbReference type="ChEBI" id="CHEBI:30616"/>
        <dbReference type="ChEBI" id="CHEBI:43474"/>
        <dbReference type="ChEBI" id="CHEBI:57791"/>
        <dbReference type="ChEBI" id="CHEBI:83900"/>
        <dbReference type="ChEBI" id="CHEBI:83905"/>
        <dbReference type="ChEBI" id="CHEBI:456216"/>
        <dbReference type="EC" id="6.3.2.13"/>
    </reaction>
</comment>
<comment type="cofactor">
    <cofactor evidence="1">
        <name>Mg(2+)</name>
        <dbReference type="ChEBI" id="CHEBI:18420"/>
    </cofactor>
</comment>
<comment type="pathway">
    <text evidence="1">Cell wall biogenesis; peptidoglycan biosynthesis.</text>
</comment>
<comment type="subcellular location">
    <subcellularLocation>
        <location evidence="1">Cytoplasm</location>
    </subcellularLocation>
</comment>
<comment type="PTM">
    <text evidence="1">Carboxylation is probably crucial for Mg(2+) binding and, consequently, for the gamma-phosphate positioning of ATP.</text>
</comment>
<comment type="similarity">
    <text evidence="1">Belongs to the MurCDEF family. MurE subfamily.</text>
</comment>
<proteinExistence type="inferred from homology"/>
<reference key="1">
    <citation type="journal article" date="2002" name="Nature">
        <title>Complete genome sequence of the model actinomycete Streptomyces coelicolor A3(2).</title>
        <authorList>
            <person name="Bentley S.D."/>
            <person name="Chater K.F."/>
            <person name="Cerdeno-Tarraga A.-M."/>
            <person name="Challis G.L."/>
            <person name="Thomson N.R."/>
            <person name="James K.D."/>
            <person name="Harris D.E."/>
            <person name="Quail M.A."/>
            <person name="Kieser H."/>
            <person name="Harper D."/>
            <person name="Bateman A."/>
            <person name="Brown S."/>
            <person name="Chandra G."/>
            <person name="Chen C.W."/>
            <person name="Collins M."/>
            <person name="Cronin A."/>
            <person name="Fraser A."/>
            <person name="Goble A."/>
            <person name="Hidalgo J."/>
            <person name="Hornsby T."/>
            <person name="Howarth S."/>
            <person name="Huang C.-H."/>
            <person name="Kieser T."/>
            <person name="Larke L."/>
            <person name="Murphy L.D."/>
            <person name="Oliver K."/>
            <person name="O'Neil S."/>
            <person name="Rabbinowitsch E."/>
            <person name="Rajandream M.A."/>
            <person name="Rutherford K.M."/>
            <person name="Rutter S."/>
            <person name="Seeger K."/>
            <person name="Saunders D."/>
            <person name="Sharp S."/>
            <person name="Squares R."/>
            <person name="Squares S."/>
            <person name="Taylor K."/>
            <person name="Warren T."/>
            <person name="Wietzorrek A."/>
            <person name="Woodward J.R."/>
            <person name="Barrell B.G."/>
            <person name="Parkhill J."/>
            <person name="Hopwood D.A."/>
        </authorList>
    </citation>
    <scope>NUCLEOTIDE SEQUENCE [LARGE SCALE GENOMIC DNA]</scope>
    <source>
        <strain>ATCC BAA-471 / A3(2) / M145</strain>
    </source>
</reference>
<dbReference type="EC" id="6.3.2.13" evidence="1"/>
<dbReference type="EMBL" id="AL939111">
    <property type="protein sequence ID" value="CAB51998.1"/>
    <property type="molecule type" value="Genomic_DNA"/>
</dbReference>
<dbReference type="PIR" id="T34959">
    <property type="entry name" value="T34959"/>
</dbReference>
<dbReference type="RefSeq" id="NP_626348.1">
    <property type="nucleotide sequence ID" value="NC_003888.3"/>
</dbReference>
<dbReference type="RefSeq" id="WP_011028131.1">
    <property type="nucleotide sequence ID" value="NZ_VNID01000001.1"/>
</dbReference>
<dbReference type="SMR" id="Q9S2W7"/>
<dbReference type="FunCoup" id="Q9S2W7">
    <property type="interactions" value="283"/>
</dbReference>
<dbReference type="STRING" id="100226.gene:17759687"/>
<dbReference type="PaxDb" id="100226-SCO2089"/>
<dbReference type="KEGG" id="sco:SCO2089"/>
<dbReference type="PATRIC" id="fig|100226.15.peg.2122"/>
<dbReference type="eggNOG" id="COG0769">
    <property type="taxonomic scope" value="Bacteria"/>
</dbReference>
<dbReference type="HOGENOM" id="CLU_022291_4_1_11"/>
<dbReference type="InParanoid" id="Q9S2W7"/>
<dbReference type="OrthoDB" id="9800958at2"/>
<dbReference type="PhylomeDB" id="Q9S2W7"/>
<dbReference type="UniPathway" id="UPA00219"/>
<dbReference type="Proteomes" id="UP000001973">
    <property type="component" value="Chromosome"/>
</dbReference>
<dbReference type="GO" id="GO:0005737">
    <property type="term" value="C:cytoplasm"/>
    <property type="evidence" value="ECO:0007669"/>
    <property type="project" value="UniProtKB-SubCell"/>
</dbReference>
<dbReference type="GO" id="GO:0005524">
    <property type="term" value="F:ATP binding"/>
    <property type="evidence" value="ECO:0007669"/>
    <property type="project" value="UniProtKB-UniRule"/>
</dbReference>
<dbReference type="GO" id="GO:0000287">
    <property type="term" value="F:magnesium ion binding"/>
    <property type="evidence" value="ECO:0007669"/>
    <property type="project" value="UniProtKB-UniRule"/>
</dbReference>
<dbReference type="GO" id="GO:0008765">
    <property type="term" value="F:UDP-N-acetylmuramoylalanyl-D-glutamate-2,6-diaminopimelate ligase activity"/>
    <property type="evidence" value="ECO:0007669"/>
    <property type="project" value="UniProtKB-UniRule"/>
</dbReference>
<dbReference type="GO" id="GO:0051301">
    <property type="term" value="P:cell division"/>
    <property type="evidence" value="ECO:0007669"/>
    <property type="project" value="UniProtKB-KW"/>
</dbReference>
<dbReference type="GO" id="GO:0071555">
    <property type="term" value="P:cell wall organization"/>
    <property type="evidence" value="ECO:0007669"/>
    <property type="project" value="UniProtKB-KW"/>
</dbReference>
<dbReference type="GO" id="GO:0009252">
    <property type="term" value="P:peptidoglycan biosynthetic process"/>
    <property type="evidence" value="ECO:0007669"/>
    <property type="project" value="UniProtKB-UniRule"/>
</dbReference>
<dbReference type="GO" id="GO:0008360">
    <property type="term" value="P:regulation of cell shape"/>
    <property type="evidence" value="ECO:0007669"/>
    <property type="project" value="UniProtKB-KW"/>
</dbReference>
<dbReference type="Gene3D" id="3.90.190.20">
    <property type="entry name" value="Mur ligase, C-terminal domain"/>
    <property type="match status" value="1"/>
</dbReference>
<dbReference type="Gene3D" id="3.40.1190.10">
    <property type="entry name" value="Mur-like, catalytic domain"/>
    <property type="match status" value="1"/>
</dbReference>
<dbReference type="Gene3D" id="3.40.1390.10">
    <property type="entry name" value="MurE/MurF, N-terminal domain"/>
    <property type="match status" value="1"/>
</dbReference>
<dbReference type="HAMAP" id="MF_00208">
    <property type="entry name" value="MurE"/>
    <property type="match status" value="1"/>
</dbReference>
<dbReference type="InterPro" id="IPR036565">
    <property type="entry name" value="Mur-like_cat_sf"/>
</dbReference>
<dbReference type="InterPro" id="IPR004101">
    <property type="entry name" value="Mur_ligase_C"/>
</dbReference>
<dbReference type="InterPro" id="IPR036615">
    <property type="entry name" value="Mur_ligase_C_dom_sf"/>
</dbReference>
<dbReference type="InterPro" id="IPR013221">
    <property type="entry name" value="Mur_ligase_cen"/>
</dbReference>
<dbReference type="InterPro" id="IPR000713">
    <property type="entry name" value="Mur_ligase_N"/>
</dbReference>
<dbReference type="InterPro" id="IPR035911">
    <property type="entry name" value="MurE/MurF_N"/>
</dbReference>
<dbReference type="InterPro" id="IPR005761">
    <property type="entry name" value="UDP-N-AcMur-Glu-dNH2Pim_ligase"/>
</dbReference>
<dbReference type="NCBIfam" id="TIGR01085">
    <property type="entry name" value="murE"/>
    <property type="match status" value="1"/>
</dbReference>
<dbReference type="NCBIfam" id="NF001124">
    <property type="entry name" value="PRK00139.1-2"/>
    <property type="match status" value="1"/>
</dbReference>
<dbReference type="NCBIfam" id="NF001126">
    <property type="entry name" value="PRK00139.1-4"/>
    <property type="match status" value="1"/>
</dbReference>
<dbReference type="PANTHER" id="PTHR23135">
    <property type="entry name" value="MUR LIGASE FAMILY MEMBER"/>
    <property type="match status" value="1"/>
</dbReference>
<dbReference type="PANTHER" id="PTHR23135:SF4">
    <property type="entry name" value="UDP-N-ACETYLMURAMOYL-L-ALANYL-D-GLUTAMATE--2,6-DIAMINOPIMELATE LIGASE MURE HOMOLOG, CHLOROPLASTIC"/>
    <property type="match status" value="1"/>
</dbReference>
<dbReference type="Pfam" id="PF01225">
    <property type="entry name" value="Mur_ligase"/>
    <property type="match status" value="1"/>
</dbReference>
<dbReference type="Pfam" id="PF02875">
    <property type="entry name" value="Mur_ligase_C"/>
    <property type="match status" value="1"/>
</dbReference>
<dbReference type="Pfam" id="PF08245">
    <property type="entry name" value="Mur_ligase_M"/>
    <property type="match status" value="1"/>
</dbReference>
<dbReference type="SUPFAM" id="SSF53623">
    <property type="entry name" value="MurD-like peptide ligases, catalytic domain"/>
    <property type="match status" value="1"/>
</dbReference>
<dbReference type="SUPFAM" id="SSF53244">
    <property type="entry name" value="MurD-like peptide ligases, peptide-binding domain"/>
    <property type="match status" value="1"/>
</dbReference>
<dbReference type="SUPFAM" id="SSF63418">
    <property type="entry name" value="MurE/MurF N-terminal domain"/>
    <property type="match status" value="1"/>
</dbReference>